<organism>
    <name type="scientific">Homo sapiens</name>
    <name type="common">Human</name>
    <dbReference type="NCBI Taxonomy" id="9606"/>
    <lineage>
        <taxon>Eukaryota</taxon>
        <taxon>Metazoa</taxon>
        <taxon>Chordata</taxon>
        <taxon>Craniata</taxon>
        <taxon>Vertebrata</taxon>
        <taxon>Euteleostomi</taxon>
        <taxon>Mammalia</taxon>
        <taxon>Eutheria</taxon>
        <taxon>Euarchontoglires</taxon>
        <taxon>Primates</taxon>
        <taxon>Haplorrhini</taxon>
        <taxon>Catarrhini</taxon>
        <taxon>Hominidae</taxon>
        <taxon>Homo</taxon>
    </lineage>
</organism>
<accession>Q5EBL8</accession>
<accession>D3DVU3</accession>
<accession>Q6UWE1</accession>
<accession>Q9P0Q1</accession>
<sequence>MDSRIPYDDYPVVFLPAYENPPAWIPPHERVHHPDYNNELTQFLPRTITLKKPPGAQLGFNIRGGKASQLGIFISKVIPDSDAHRAGLQEGDQVLAVNDVDFQDIEHSKAVEILKTAREISMRVRFFPYNYHRQKERTVH</sequence>
<reference key="1">
    <citation type="journal article" date="2000" name="Genome Res.">
        <title>Cloning and functional analysis of cDNAs with open reading frames for 300 previously undefined genes expressed in CD34+ hematopoietic stem/progenitor cells.</title>
        <authorList>
            <person name="Zhang Q.-H."/>
            <person name="Ye M."/>
            <person name="Wu X.-Y."/>
            <person name="Ren S.-X."/>
            <person name="Zhao M."/>
            <person name="Zhao C.-J."/>
            <person name="Fu G."/>
            <person name="Shen Y."/>
            <person name="Fan H.-Y."/>
            <person name="Lu G."/>
            <person name="Zhong M."/>
            <person name="Xu X.-R."/>
            <person name="Han Z.-G."/>
            <person name="Zhang J.-W."/>
            <person name="Tao J."/>
            <person name="Huang Q.-H."/>
            <person name="Zhou J."/>
            <person name="Hu G.-X."/>
            <person name="Gu J."/>
            <person name="Chen S.-J."/>
            <person name="Chen Z."/>
        </authorList>
    </citation>
    <scope>NUCLEOTIDE SEQUENCE [LARGE SCALE MRNA] (ISOFORM 1)</scope>
    <source>
        <tissue>Umbilical cord blood</tissue>
    </source>
</reference>
<reference key="2">
    <citation type="journal article" date="2003" name="Genome Res.">
        <title>The secreted protein discovery initiative (SPDI), a large-scale effort to identify novel human secreted and transmembrane proteins: a bioinformatics assessment.</title>
        <authorList>
            <person name="Clark H.F."/>
            <person name="Gurney A.L."/>
            <person name="Abaya E."/>
            <person name="Baker K."/>
            <person name="Baldwin D.T."/>
            <person name="Brush J."/>
            <person name="Chen J."/>
            <person name="Chow B."/>
            <person name="Chui C."/>
            <person name="Crowley C."/>
            <person name="Currell B."/>
            <person name="Deuel B."/>
            <person name="Dowd P."/>
            <person name="Eaton D."/>
            <person name="Foster J.S."/>
            <person name="Grimaldi C."/>
            <person name="Gu Q."/>
            <person name="Hass P.E."/>
            <person name="Heldens S."/>
            <person name="Huang A."/>
            <person name="Kim H.S."/>
            <person name="Klimowski L."/>
            <person name="Jin Y."/>
            <person name="Johnson S."/>
            <person name="Lee J."/>
            <person name="Lewis L."/>
            <person name="Liao D."/>
            <person name="Mark M.R."/>
            <person name="Robbie E."/>
            <person name="Sanchez C."/>
            <person name="Schoenfeld J."/>
            <person name="Seshagiri S."/>
            <person name="Simmons L."/>
            <person name="Singh J."/>
            <person name="Smith V."/>
            <person name="Stinson J."/>
            <person name="Vagts A."/>
            <person name="Vandlen R.L."/>
            <person name="Watanabe C."/>
            <person name="Wieand D."/>
            <person name="Woods K."/>
            <person name="Xie M.-H."/>
            <person name="Yansura D.G."/>
            <person name="Yi S."/>
            <person name="Yu G."/>
            <person name="Yuan J."/>
            <person name="Zhang M."/>
            <person name="Zhang Z."/>
            <person name="Goddard A.D."/>
            <person name="Wood W.I."/>
            <person name="Godowski P.J."/>
            <person name="Gray A.M."/>
        </authorList>
    </citation>
    <scope>NUCLEOTIDE SEQUENCE [LARGE SCALE MRNA] (ISOFORM 2)</scope>
</reference>
<reference key="3">
    <citation type="journal article" date="2004" name="Nat. Genet.">
        <title>Complete sequencing and characterization of 21,243 full-length human cDNAs.</title>
        <authorList>
            <person name="Ota T."/>
            <person name="Suzuki Y."/>
            <person name="Nishikawa T."/>
            <person name="Otsuki T."/>
            <person name="Sugiyama T."/>
            <person name="Irie R."/>
            <person name="Wakamatsu A."/>
            <person name="Hayashi K."/>
            <person name="Sato H."/>
            <person name="Nagai K."/>
            <person name="Kimura K."/>
            <person name="Makita H."/>
            <person name="Sekine M."/>
            <person name="Obayashi M."/>
            <person name="Nishi T."/>
            <person name="Shibahara T."/>
            <person name="Tanaka T."/>
            <person name="Ishii S."/>
            <person name="Yamamoto J."/>
            <person name="Saito K."/>
            <person name="Kawai Y."/>
            <person name="Isono Y."/>
            <person name="Nakamura Y."/>
            <person name="Nagahari K."/>
            <person name="Murakami K."/>
            <person name="Yasuda T."/>
            <person name="Iwayanagi T."/>
            <person name="Wagatsuma M."/>
            <person name="Shiratori A."/>
            <person name="Sudo H."/>
            <person name="Hosoiri T."/>
            <person name="Kaku Y."/>
            <person name="Kodaira H."/>
            <person name="Kondo H."/>
            <person name="Sugawara M."/>
            <person name="Takahashi M."/>
            <person name="Kanda K."/>
            <person name="Yokoi T."/>
            <person name="Furuya T."/>
            <person name="Kikkawa E."/>
            <person name="Omura Y."/>
            <person name="Abe K."/>
            <person name="Kamihara K."/>
            <person name="Katsuta N."/>
            <person name="Sato K."/>
            <person name="Tanikawa M."/>
            <person name="Yamazaki M."/>
            <person name="Ninomiya K."/>
            <person name="Ishibashi T."/>
            <person name="Yamashita H."/>
            <person name="Murakawa K."/>
            <person name="Fujimori K."/>
            <person name="Tanai H."/>
            <person name="Kimata M."/>
            <person name="Watanabe M."/>
            <person name="Hiraoka S."/>
            <person name="Chiba Y."/>
            <person name="Ishida S."/>
            <person name="Ono Y."/>
            <person name="Takiguchi S."/>
            <person name="Watanabe S."/>
            <person name="Yosida M."/>
            <person name="Hotuta T."/>
            <person name="Kusano J."/>
            <person name="Kanehori K."/>
            <person name="Takahashi-Fujii A."/>
            <person name="Hara H."/>
            <person name="Tanase T.-O."/>
            <person name="Nomura Y."/>
            <person name="Togiya S."/>
            <person name="Komai F."/>
            <person name="Hara R."/>
            <person name="Takeuchi K."/>
            <person name="Arita M."/>
            <person name="Imose N."/>
            <person name="Musashino K."/>
            <person name="Yuuki H."/>
            <person name="Oshima A."/>
            <person name="Sasaki N."/>
            <person name="Aotsuka S."/>
            <person name="Yoshikawa Y."/>
            <person name="Matsunawa H."/>
            <person name="Ichihara T."/>
            <person name="Shiohata N."/>
            <person name="Sano S."/>
            <person name="Moriya S."/>
            <person name="Momiyama H."/>
            <person name="Satoh N."/>
            <person name="Takami S."/>
            <person name="Terashima Y."/>
            <person name="Suzuki O."/>
            <person name="Nakagawa S."/>
            <person name="Senoh A."/>
            <person name="Mizoguchi H."/>
            <person name="Goto Y."/>
            <person name="Shimizu F."/>
            <person name="Wakebe H."/>
            <person name="Hishigaki H."/>
            <person name="Watanabe T."/>
            <person name="Sugiyama A."/>
            <person name="Takemoto M."/>
            <person name="Kawakami B."/>
            <person name="Yamazaki M."/>
            <person name="Watanabe K."/>
            <person name="Kumagai A."/>
            <person name="Itakura S."/>
            <person name="Fukuzumi Y."/>
            <person name="Fujimori Y."/>
            <person name="Komiyama M."/>
            <person name="Tashiro H."/>
            <person name="Tanigami A."/>
            <person name="Fujiwara T."/>
            <person name="Ono T."/>
            <person name="Yamada K."/>
            <person name="Fujii Y."/>
            <person name="Ozaki K."/>
            <person name="Hirao M."/>
            <person name="Ohmori Y."/>
            <person name="Kawabata A."/>
            <person name="Hikiji T."/>
            <person name="Kobatake N."/>
            <person name="Inagaki H."/>
            <person name="Ikema Y."/>
            <person name="Okamoto S."/>
            <person name="Okitani R."/>
            <person name="Kawakami T."/>
            <person name="Noguchi S."/>
            <person name="Itoh T."/>
            <person name="Shigeta K."/>
            <person name="Senba T."/>
            <person name="Matsumura K."/>
            <person name="Nakajima Y."/>
            <person name="Mizuno T."/>
            <person name="Morinaga M."/>
            <person name="Sasaki M."/>
            <person name="Togashi T."/>
            <person name="Oyama M."/>
            <person name="Hata H."/>
            <person name="Watanabe M."/>
            <person name="Komatsu T."/>
            <person name="Mizushima-Sugano J."/>
            <person name="Satoh T."/>
            <person name="Shirai Y."/>
            <person name="Takahashi Y."/>
            <person name="Nakagawa K."/>
            <person name="Okumura K."/>
            <person name="Nagase T."/>
            <person name="Nomura N."/>
            <person name="Kikuchi H."/>
            <person name="Masuho Y."/>
            <person name="Yamashita R."/>
            <person name="Nakai K."/>
            <person name="Yada T."/>
            <person name="Nakamura Y."/>
            <person name="Ohara O."/>
            <person name="Isogai T."/>
            <person name="Sugano S."/>
        </authorList>
    </citation>
    <scope>NUCLEOTIDE SEQUENCE [LARGE SCALE MRNA]</scope>
    <source>
        <tissue>Artery smooth muscle</tissue>
    </source>
</reference>
<reference key="4">
    <citation type="submission" date="2004-06" db="EMBL/GenBank/DDBJ databases">
        <title>Cloning of human full open reading frames in Gateway(TM) system entry vector (pDONR201).</title>
        <authorList>
            <person name="Ebert L."/>
            <person name="Schick M."/>
            <person name="Neubert P."/>
            <person name="Schatten R."/>
            <person name="Henze S."/>
            <person name="Korn B."/>
        </authorList>
    </citation>
    <scope>NUCLEOTIDE SEQUENCE [LARGE SCALE MRNA] (ISOFORM 1)</scope>
</reference>
<reference key="5">
    <citation type="journal article" date="2007" name="BMC Genomics">
        <title>The full-ORF clone resource of the German cDNA consortium.</title>
        <authorList>
            <person name="Bechtel S."/>
            <person name="Rosenfelder H."/>
            <person name="Duda A."/>
            <person name="Schmidt C.P."/>
            <person name="Ernst U."/>
            <person name="Wellenreuther R."/>
            <person name="Mehrle A."/>
            <person name="Schuster C."/>
            <person name="Bahr A."/>
            <person name="Bloecker H."/>
            <person name="Heubner D."/>
            <person name="Hoerlein A."/>
            <person name="Michel G."/>
            <person name="Wedler H."/>
            <person name="Koehrer K."/>
            <person name="Ottenwaelder B."/>
            <person name="Poustka A."/>
            <person name="Wiemann S."/>
            <person name="Schupp I."/>
        </authorList>
    </citation>
    <scope>NUCLEOTIDE SEQUENCE [LARGE SCALE MRNA] (ISOFORM 1)</scope>
    <source>
        <tissue>Cerebellum</tissue>
    </source>
</reference>
<reference key="6">
    <citation type="journal article" date="2005" name="Nature">
        <title>The DNA sequence of the human X chromosome.</title>
        <authorList>
            <person name="Ross M.T."/>
            <person name="Grafham D.V."/>
            <person name="Coffey A.J."/>
            <person name="Scherer S."/>
            <person name="McLay K."/>
            <person name="Muzny D."/>
            <person name="Platzer M."/>
            <person name="Howell G.R."/>
            <person name="Burrows C."/>
            <person name="Bird C.P."/>
            <person name="Frankish A."/>
            <person name="Lovell F.L."/>
            <person name="Howe K.L."/>
            <person name="Ashurst J.L."/>
            <person name="Fulton R.S."/>
            <person name="Sudbrak R."/>
            <person name="Wen G."/>
            <person name="Jones M.C."/>
            <person name="Hurles M.E."/>
            <person name="Andrews T.D."/>
            <person name="Scott C.E."/>
            <person name="Searle S."/>
            <person name="Ramser J."/>
            <person name="Whittaker A."/>
            <person name="Deadman R."/>
            <person name="Carter N.P."/>
            <person name="Hunt S.E."/>
            <person name="Chen R."/>
            <person name="Cree A."/>
            <person name="Gunaratne P."/>
            <person name="Havlak P."/>
            <person name="Hodgson A."/>
            <person name="Metzker M.L."/>
            <person name="Richards S."/>
            <person name="Scott G."/>
            <person name="Steffen D."/>
            <person name="Sodergren E."/>
            <person name="Wheeler D.A."/>
            <person name="Worley K.C."/>
            <person name="Ainscough R."/>
            <person name="Ambrose K.D."/>
            <person name="Ansari-Lari M.A."/>
            <person name="Aradhya S."/>
            <person name="Ashwell R.I."/>
            <person name="Babbage A.K."/>
            <person name="Bagguley C.L."/>
            <person name="Ballabio A."/>
            <person name="Banerjee R."/>
            <person name="Barker G.E."/>
            <person name="Barlow K.F."/>
            <person name="Barrett I.P."/>
            <person name="Bates K.N."/>
            <person name="Beare D.M."/>
            <person name="Beasley H."/>
            <person name="Beasley O."/>
            <person name="Beck A."/>
            <person name="Bethel G."/>
            <person name="Blechschmidt K."/>
            <person name="Brady N."/>
            <person name="Bray-Allen S."/>
            <person name="Bridgeman A.M."/>
            <person name="Brown A.J."/>
            <person name="Brown M.J."/>
            <person name="Bonnin D."/>
            <person name="Bruford E.A."/>
            <person name="Buhay C."/>
            <person name="Burch P."/>
            <person name="Burford D."/>
            <person name="Burgess J."/>
            <person name="Burrill W."/>
            <person name="Burton J."/>
            <person name="Bye J.M."/>
            <person name="Carder C."/>
            <person name="Carrel L."/>
            <person name="Chako J."/>
            <person name="Chapman J.C."/>
            <person name="Chavez D."/>
            <person name="Chen E."/>
            <person name="Chen G."/>
            <person name="Chen Y."/>
            <person name="Chen Z."/>
            <person name="Chinault C."/>
            <person name="Ciccodicola A."/>
            <person name="Clark S.Y."/>
            <person name="Clarke G."/>
            <person name="Clee C.M."/>
            <person name="Clegg S."/>
            <person name="Clerc-Blankenburg K."/>
            <person name="Clifford K."/>
            <person name="Cobley V."/>
            <person name="Cole C.G."/>
            <person name="Conquer J.S."/>
            <person name="Corby N."/>
            <person name="Connor R.E."/>
            <person name="David R."/>
            <person name="Davies J."/>
            <person name="Davis C."/>
            <person name="Davis J."/>
            <person name="Delgado O."/>
            <person name="Deshazo D."/>
            <person name="Dhami P."/>
            <person name="Ding Y."/>
            <person name="Dinh H."/>
            <person name="Dodsworth S."/>
            <person name="Draper H."/>
            <person name="Dugan-Rocha S."/>
            <person name="Dunham A."/>
            <person name="Dunn M."/>
            <person name="Durbin K.J."/>
            <person name="Dutta I."/>
            <person name="Eades T."/>
            <person name="Ellwood M."/>
            <person name="Emery-Cohen A."/>
            <person name="Errington H."/>
            <person name="Evans K.L."/>
            <person name="Faulkner L."/>
            <person name="Francis F."/>
            <person name="Frankland J."/>
            <person name="Fraser A.E."/>
            <person name="Galgoczy P."/>
            <person name="Gilbert J."/>
            <person name="Gill R."/>
            <person name="Gloeckner G."/>
            <person name="Gregory S.G."/>
            <person name="Gribble S."/>
            <person name="Griffiths C."/>
            <person name="Grocock R."/>
            <person name="Gu Y."/>
            <person name="Gwilliam R."/>
            <person name="Hamilton C."/>
            <person name="Hart E.A."/>
            <person name="Hawes A."/>
            <person name="Heath P.D."/>
            <person name="Heitmann K."/>
            <person name="Hennig S."/>
            <person name="Hernandez J."/>
            <person name="Hinzmann B."/>
            <person name="Ho S."/>
            <person name="Hoffs M."/>
            <person name="Howden P.J."/>
            <person name="Huckle E.J."/>
            <person name="Hume J."/>
            <person name="Hunt P.J."/>
            <person name="Hunt A.R."/>
            <person name="Isherwood J."/>
            <person name="Jacob L."/>
            <person name="Johnson D."/>
            <person name="Jones S."/>
            <person name="de Jong P.J."/>
            <person name="Joseph S.S."/>
            <person name="Keenan S."/>
            <person name="Kelly S."/>
            <person name="Kershaw J.K."/>
            <person name="Khan Z."/>
            <person name="Kioschis P."/>
            <person name="Klages S."/>
            <person name="Knights A.J."/>
            <person name="Kosiura A."/>
            <person name="Kovar-Smith C."/>
            <person name="Laird G.K."/>
            <person name="Langford C."/>
            <person name="Lawlor S."/>
            <person name="Leversha M."/>
            <person name="Lewis L."/>
            <person name="Liu W."/>
            <person name="Lloyd C."/>
            <person name="Lloyd D.M."/>
            <person name="Loulseged H."/>
            <person name="Loveland J.E."/>
            <person name="Lovell J.D."/>
            <person name="Lozado R."/>
            <person name="Lu J."/>
            <person name="Lyne R."/>
            <person name="Ma J."/>
            <person name="Maheshwari M."/>
            <person name="Matthews L.H."/>
            <person name="McDowall J."/>
            <person name="McLaren S."/>
            <person name="McMurray A."/>
            <person name="Meidl P."/>
            <person name="Meitinger T."/>
            <person name="Milne S."/>
            <person name="Miner G."/>
            <person name="Mistry S.L."/>
            <person name="Morgan M."/>
            <person name="Morris S."/>
            <person name="Mueller I."/>
            <person name="Mullikin J.C."/>
            <person name="Nguyen N."/>
            <person name="Nordsiek G."/>
            <person name="Nyakatura G."/>
            <person name="O'dell C.N."/>
            <person name="Okwuonu G."/>
            <person name="Palmer S."/>
            <person name="Pandian R."/>
            <person name="Parker D."/>
            <person name="Parrish J."/>
            <person name="Pasternak S."/>
            <person name="Patel D."/>
            <person name="Pearce A.V."/>
            <person name="Pearson D.M."/>
            <person name="Pelan S.E."/>
            <person name="Perez L."/>
            <person name="Porter K.M."/>
            <person name="Ramsey Y."/>
            <person name="Reichwald K."/>
            <person name="Rhodes S."/>
            <person name="Ridler K.A."/>
            <person name="Schlessinger D."/>
            <person name="Schueler M.G."/>
            <person name="Sehra H.K."/>
            <person name="Shaw-Smith C."/>
            <person name="Shen H."/>
            <person name="Sheridan E.M."/>
            <person name="Shownkeen R."/>
            <person name="Skuce C.D."/>
            <person name="Smith M.L."/>
            <person name="Sotheran E.C."/>
            <person name="Steingruber H.E."/>
            <person name="Steward C.A."/>
            <person name="Storey R."/>
            <person name="Swann R.M."/>
            <person name="Swarbreck D."/>
            <person name="Tabor P.E."/>
            <person name="Taudien S."/>
            <person name="Taylor T."/>
            <person name="Teague B."/>
            <person name="Thomas K."/>
            <person name="Thorpe A."/>
            <person name="Timms K."/>
            <person name="Tracey A."/>
            <person name="Trevanion S."/>
            <person name="Tromans A.C."/>
            <person name="d'Urso M."/>
            <person name="Verduzco D."/>
            <person name="Villasana D."/>
            <person name="Waldron L."/>
            <person name="Wall M."/>
            <person name="Wang Q."/>
            <person name="Warren J."/>
            <person name="Warry G.L."/>
            <person name="Wei X."/>
            <person name="West A."/>
            <person name="Whitehead S.L."/>
            <person name="Whiteley M.N."/>
            <person name="Wilkinson J.E."/>
            <person name="Willey D.L."/>
            <person name="Williams G."/>
            <person name="Williams L."/>
            <person name="Williamson A."/>
            <person name="Williamson H."/>
            <person name="Wilming L."/>
            <person name="Woodmansey R.L."/>
            <person name="Wray P.W."/>
            <person name="Yen J."/>
            <person name="Zhang J."/>
            <person name="Zhou J."/>
            <person name="Zoghbi H."/>
            <person name="Zorilla S."/>
            <person name="Buck D."/>
            <person name="Reinhardt R."/>
            <person name="Poustka A."/>
            <person name="Rosenthal A."/>
            <person name="Lehrach H."/>
            <person name="Meindl A."/>
            <person name="Minx P.J."/>
            <person name="Hillier L.W."/>
            <person name="Willard H.F."/>
            <person name="Wilson R.K."/>
            <person name="Waterston R.H."/>
            <person name="Rice C.M."/>
            <person name="Vaudin M."/>
            <person name="Coulson A."/>
            <person name="Nelson D.L."/>
            <person name="Weinstock G."/>
            <person name="Sulston J.E."/>
            <person name="Durbin R.M."/>
            <person name="Hubbard T."/>
            <person name="Gibbs R.A."/>
            <person name="Beck S."/>
            <person name="Rogers J."/>
            <person name="Bentley D.R."/>
        </authorList>
    </citation>
    <scope>NUCLEOTIDE SEQUENCE [LARGE SCALE GENOMIC DNA]</scope>
</reference>
<reference key="7">
    <citation type="submission" date="2005-09" db="EMBL/GenBank/DDBJ databases">
        <authorList>
            <person name="Mural R.J."/>
            <person name="Istrail S."/>
            <person name="Sutton G.G."/>
            <person name="Florea L."/>
            <person name="Halpern A.L."/>
            <person name="Mobarry C.M."/>
            <person name="Lippert R."/>
            <person name="Walenz B."/>
            <person name="Shatkay H."/>
            <person name="Dew I."/>
            <person name="Miller J.R."/>
            <person name="Flanigan M.J."/>
            <person name="Edwards N.J."/>
            <person name="Bolanos R."/>
            <person name="Fasulo D."/>
            <person name="Halldorsson B.V."/>
            <person name="Hannenhalli S."/>
            <person name="Turner R."/>
            <person name="Yooseph S."/>
            <person name="Lu F."/>
            <person name="Nusskern D.R."/>
            <person name="Shue B.C."/>
            <person name="Zheng X.H."/>
            <person name="Zhong F."/>
            <person name="Delcher A.L."/>
            <person name="Huson D.H."/>
            <person name="Kravitz S.A."/>
            <person name="Mouchard L."/>
            <person name="Reinert K."/>
            <person name="Remington K.A."/>
            <person name="Clark A.G."/>
            <person name="Waterman M.S."/>
            <person name="Eichler E.E."/>
            <person name="Adams M.D."/>
            <person name="Hunkapiller M.W."/>
            <person name="Myers E.W."/>
            <person name="Venter J.C."/>
        </authorList>
    </citation>
    <scope>NUCLEOTIDE SEQUENCE [LARGE SCALE GENOMIC DNA]</scope>
</reference>
<reference key="8">
    <citation type="journal article" date="2004" name="Genome Res.">
        <title>The status, quality, and expansion of the NIH full-length cDNA project: the Mammalian Gene Collection (MGC).</title>
        <authorList>
            <consortium name="The MGC Project Team"/>
        </authorList>
    </citation>
    <scope>NUCLEOTIDE SEQUENCE [LARGE SCALE MRNA] (ISOFORM 1)</scope>
    <source>
        <tissue>Chondrosarcoma</tissue>
        <tissue>Muscle</tissue>
    </source>
</reference>
<reference key="9">
    <citation type="journal article" date="2003" name="Ann. N. Y. Acad. Sci.">
        <title>Characterization of PISP, a novel single-PDZ protein that binds to all plasma membrane Ca2+-ATPase b-splice variants.</title>
        <authorList>
            <person name="Goellner G.M."/>
            <person name="DeMarco S.J."/>
            <person name="Strehler E.E."/>
        </authorList>
    </citation>
    <scope>INTERACTION WITH ATP2B1; ATP2B2; ATP2B3 AND ATP2B4</scope>
    <scope>SUBCELLULAR LOCATION</scope>
    <scope>TISSUE SPECIFICITY</scope>
</reference>
<reference key="10">
    <citation type="journal article" date="2005" name="J. Biol. Chem.">
        <title>A single PDZ domain protein interacts with the Menkes copper ATPase, ATP7A. A new protein implicated in copper homeostasis.</title>
        <authorList>
            <person name="Stephenson S.E."/>
            <person name="Dubach D."/>
            <person name="Lim C.M."/>
            <person name="Mercer J.F."/>
            <person name="La Fontaine S."/>
        </authorList>
    </citation>
    <scope>INTERACTION WITH ATP7A</scope>
    <scope>IDENTIFICATION OF ALTERNATIVE SPLICING (ISOFORMS 1 AND 2)</scope>
</reference>
<reference key="11">
    <citation type="journal article" date="2011" name="Am. J. Physiol.">
        <title>Association of PDZ-containing protein PDZD11 with the human sodium-dependent multivitamin transporter.</title>
        <authorList>
            <person name="Nabokina S.M."/>
            <person name="Subramanian V.S."/>
            <person name="Said H.M."/>
        </authorList>
    </citation>
    <scope>INTERACTION WITH SLC5A6</scope>
</reference>
<reference key="12">
    <citation type="journal article" date="2011" name="BMC Syst. Biol.">
        <title>Initial characterization of the human central proteome.</title>
        <authorList>
            <person name="Burkard T.R."/>
            <person name="Planyavsky M."/>
            <person name="Kaupe I."/>
            <person name="Breitwieser F.P."/>
            <person name="Buerckstuemmer T."/>
            <person name="Bennett K.L."/>
            <person name="Superti-Furga G."/>
            <person name="Colinge J."/>
        </authorList>
    </citation>
    <scope>IDENTIFICATION BY MASS SPECTROMETRY [LARGE SCALE ANALYSIS]</scope>
</reference>
<reference key="13">
    <citation type="journal article" date="2018" name="Cell Rep.">
        <title>A Dock-and-Lock Mechanism Clusters ADAM10 at Cell-Cell Junctions to Promote alpha-Toxin Cytotoxicity.</title>
        <authorList>
            <person name="Shah J."/>
            <person name="Rouaud F."/>
            <person name="Guerrera D."/>
            <person name="Vasileva E."/>
            <person name="Popov L.M."/>
            <person name="Kelley W.L."/>
            <person name="Rubinstein E."/>
            <person name="Carette J.E."/>
            <person name="Amieva M.R."/>
            <person name="Citi S."/>
        </authorList>
    </citation>
    <scope>FUNCTION</scope>
    <scope>INTERACTION WITH PLEKHA7</scope>
    <scope>SUBCELLULAR LOCATION</scope>
</reference>
<reference key="14">
    <citation type="journal article" date="2012" name="N. Engl. J. Med.">
        <title>Diagnostic exome sequencing in persons with severe intellectual disability.</title>
        <authorList>
            <person name="de Ligt J."/>
            <person name="Willemsen M.H."/>
            <person name="van Bon B.W."/>
            <person name="Kleefstra T."/>
            <person name="Yntema H.G."/>
            <person name="Kroes T."/>
            <person name="Vulto-van Silfhout A.T."/>
            <person name="Koolen D.A."/>
            <person name="de Vries P."/>
            <person name="Gilissen C."/>
            <person name="del Rosario M."/>
            <person name="Hoischen A."/>
            <person name="Scheffer H."/>
            <person name="de Vries B.B."/>
            <person name="Brunner H.G."/>
            <person name="Veltman J.A."/>
            <person name="Vissers L.E."/>
        </authorList>
    </citation>
    <scope>VARIANT TYR-81</scope>
</reference>
<proteinExistence type="evidence at protein level"/>
<dbReference type="EMBL" id="AF151061">
    <property type="protein sequence ID" value="AAF36147.1"/>
    <property type="molecule type" value="mRNA"/>
</dbReference>
<dbReference type="EMBL" id="AY358829">
    <property type="protein sequence ID" value="AAQ89188.1"/>
    <property type="molecule type" value="mRNA"/>
</dbReference>
<dbReference type="EMBL" id="AK024746">
    <property type="status" value="NOT_ANNOTATED_CDS"/>
    <property type="molecule type" value="mRNA"/>
</dbReference>
<dbReference type="EMBL" id="CR457149">
    <property type="protein sequence ID" value="CAG33430.1"/>
    <property type="molecule type" value="mRNA"/>
</dbReference>
<dbReference type="EMBL" id="BX537725">
    <property type="protein sequence ID" value="CAD97820.1"/>
    <property type="molecule type" value="mRNA"/>
</dbReference>
<dbReference type="EMBL" id="AL357752">
    <property type="status" value="NOT_ANNOTATED_CDS"/>
    <property type="molecule type" value="Genomic_DNA"/>
</dbReference>
<dbReference type="EMBL" id="CH471132">
    <property type="protein sequence ID" value="EAX05345.1"/>
    <property type="molecule type" value="Genomic_DNA"/>
</dbReference>
<dbReference type="EMBL" id="CH471132">
    <property type="protein sequence ID" value="EAX05346.1"/>
    <property type="molecule type" value="Genomic_DNA"/>
</dbReference>
<dbReference type="EMBL" id="BC012996">
    <property type="protein sequence ID" value="AAH12996.1"/>
    <property type="molecule type" value="mRNA"/>
</dbReference>
<dbReference type="EMBL" id="BC089433">
    <property type="protein sequence ID" value="AAH89433.1"/>
    <property type="molecule type" value="mRNA"/>
</dbReference>
<dbReference type="CCDS" id="CCDS14400.1">
    <molecule id="Q5EBL8-1"/>
</dbReference>
<dbReference type="RefSeq" id="NP_001357103.1">
    <molecule id="Q5EBL8-1"/>
    <property type="nucleotide sequence ID" value="NM_001370174.1"/>
</dbReference>
<dbReference type="RefSeq" id="NP_001357104.1">
    <molecule id="Q5EBL8-1"/>
    <property type="nucleotide sequence ID" value="NM_001370175.1"/>
</dbReference>
<dbReference type="RefSeq" id="NP_001357105.1">
    <molecule id="Q5EBL8-1"/>
    <property type="nucleotide sequence ID" value="NM_001370176.1"/>
</dbReference>
<dbReference type="RefSeq" id="NP_001357106.1">
    <molecule id="Q5EBL8-1"/>
    <property type="nucleotide sequence ID" value="NM_001370177.1"/>
</dbReference>
<dbReference type="RefSeq" id="NP_057568.1">
    <molecule id="Q5EBL8-1"/>
    <property type="nucleotide sequence ID" value="NM_016484.5"/>
</dbReference>
<dbReference type="RefSeq" id="XP_011529275.1">
    <property type="nucleotide sequence ID" value="XM_011530973.2"/>
</dbReference>
<dbReference type="RefSeq" id="XP_016885057.1">
    <property type="nucleotide sequence ID" value="XM_017029568.1"/>
</dbReference>
<dbReference type="SMR" id="Q5EBL8"/>
<dbReference type="BioGRID" id="119405">
    <property type="interactions" value="69"/>
</dbReference>
<dbReference type="CORUM" id="Q5EBL8"/>
<dbReference type="FunCoup" id="Q5EBL8">
    <property type="interactions" value="670"/>
</dbReference>
<dbReference type="IntAct" id="Q5EBL8">
    <property type="interactions" value="54"/>
</dbReference>
<dbReference type="MINT" id="Q5EBL8"/>
<dbReference type="STRING" id="9606.ENSP00000239666"/>
<dbReference type="iPTMnet" id="Q5EBL8"/>
<dbReference type="PhosphoSitePlus" id="Q5EBL8"/>
<dbReference type="BioMuta" id="PDZD11"/>
<dbReference type="DMDM" id="73621365"/>
<dbReference type="jPOST" id="Q5EBL8"/>
<dbReference type="MassIVE" id="Q5EBL8"/>
<dbReference type="PaxDb" id="9606-ENSP00000239666"/>
<dbReference type="PeptideAtlas" id="Q5EBL8"/>
<dbReference type="ProteomicsDB" id="62764">
    <molecule id="Q5EBL8-1"/>
</dbReference>
<dbReference type="ProteomicsDB" id="62765">
    <molecule id="Q5EBL8-2"/>
</dbReference>
<dbReference type="Pumba" id="Q5EBL8"/>
<dbReference type="Antibodypedia" id="581">
    <property type="antibodies" value="69 antibodies from 17 providers"/>
</dbReference>
<dbReference type="DNASU" id="51248"/>
<dbReference type="Ensembl" id="ENST00000239666.9">
    <molecule id="Q5EBL8-1"/>
    <property type="protein sequence ID" value="ENSP00000239666.4"/>
    <property type="gene ID" value="ENSG00000120509.12"/>
</dbReference>
<dbReference type="Ensembl" id="ENST00000374454.1">
    <molecule id="Q5EBL8-1"/>
    <property type="protein sequence ID" value="ENSP00000363578.1"/>
    <property type="gene ID" value="ENSG00000120509.12"/>
</dbReference>
<dbReference type="Ensembl" id="ENST00000473667.6">
    <molecule id="Q5EBL8-1"/>
    <property type="protein sequence ID" value="ENSP00000512018.1"/>
    <property type="gene ID" value="ENSG00000120509.12"/>
</dbReference>
<dbReference type="Ensembl" id="ENST00000486461.2">
    <molecule id="Q5EBL8-1"/>
    <property type="protein sequence ID" value="ENSP00000512019.1"/>
    <property type="gene ID" value="ENSG00000120509.12"/>
</dbReference>
<dbReference type="Ensembl" id="ENST00000695560.1">
    <molecule id="Q5EBL8-1"/>
    <property type="protein sequence ID" value="ENSP00000512017.1"/>
    <property type="gene ID" value="ENSG00000120509.12"/>
</dbReference>
<dbReference type="GeneID" id="51248"/>
<dbReference type="KEGG" id="hsa:51248"/>
<dbReference type="MANE-Select" id="ENST00000239666.9">
    <property type="protein sequence ID" value="ENSP00000239666.4"/>
    <property type="RefSeq nucleotide sequence ID" value="NM_016484.5"/>
    <property type="RefSeq protein sequence ID" value="NP_057568.1"/>
</dbReference>
<dbReference type="UCSC" id="uc004dyd.2">
    <molecule id="Q5EBL8-1"/>
    <property type="organism name" value="human"/>
</dbReference>
<dbReference type="AGR" id="HGNC:28034"/>
<dbReference type="CTD" id="51248"/>
<dbReference type="DisGeNET" id="51248"/>
<dbReference type="GeneCards" id="PDZD11"/>
<dbReference type="HGNC" id="HGNC:28034">
    <property type="gene designation" value="PDZD11"/>
</dbReference>
<dbReference type="HPA" id="ENSG00000120509">
    <property type="expression patterns" value="Low tissue specificity"/>
</dbReference>
<dbReference type="MIM" id="300632">
    <property type="type" value="gene"/>
</dbReference>
<dbReference type="neXtProt" id="NX_Q5EBL8"/>
<dbReference type="OpenTargets" id="ENSG00000120509"/>
<dbReference type="PharmGKB" id="PA134968632"/>
<dbReference type="VEuPathDB" id="HostDB:ENSG00000120509"/>
<dbReference type="eggNOG" id="KOG3528">
    <property type="taxonomic scope" value="Eukaryota"/>
</dbReference>
<dbReference type="GeneTree" id="ENSGT00940000153222"/>
<dbReference type="HOGENOM" id="CLU_133335_0_0_1"/>
<dbReference type="InParanoid" id="Q5EBL8"/>
<dbReference type="OMA" id="RGGREHN"/>
<dbReference type="OrthoDB" id="6021951at2759"/>
<dbReference type="PAN-GO" id="Q5EBL8">
    <property type="GO annotations" value="6 GO annotations based on evolutionary models"/>
</dbReference>
<dbReference type="PhylomeDB" id="Q5EBL8"/>
<dbReference type="TreeFam" id="TF318964"/>
<dbReference type="PathwayCommons" id="Q5EBL8"/>
<dbReference type="Reactome" id="R-HSA-196780">
    <property type="pathway name" value="Biotin transport and metabolism"/>
</dbReference>
<dbReference type="Reactome" id="R-HSA-199220">
    <property type="pathway name" value="Vitamin B5 (pantothenate) metabolism"/>
</dbReference>
<dbReference type="Reactome" id="R-HSA-425397">
    <property type="pathway name" value="Transport of vitamins, nucleosides, and related molecules"/>
</dbReference>
<dbReference type="Reactome" id="R-HSA-6803544">
    <property type="pathway name" value="Ion influx/efflux at host-pathogen interface"/>
</dbReference>
<dbReference type="Reactome" id="R-HSA-936837">
    <property type="pathway name" value="Ion transport by P-type ATPases"/>
</dbReference>
<dbReference type="SignaLink" id="Q5EBL8"/>
<dbReference type="SIGNOR" id="Q5EBL8"/>
<dbReference type="BioGRID-ORCS" id="51248">
    <property type="hits" value="16 hits in 786 CRISPR screens"/>
</dbReference>
<dbReference type="ChiTaRS" id="PDZD11">
    <property type="organism name" value="human"/>
</dbReference>
<dbReference type="GeneWiki" id="PDZD11"/>
<dbReference type="GenomeRNAi" id="51248"/>
<dbReference type="Pharos" id="Q5EBL8">
    <property type="development level" value="Tbio"/>
</dbReference>
<dbReference type="PRO" id="PR:Q5EBL8"/>
<dbReference type="Proteomes" id="UP000005640">
    <property type="component" value="Chromosome X"/>
</dbReference>
<dbReference type="RNAct" id="Q5EBL8">
    <property type="molecule type" value="protein"/>
</dbReference>
<dbReference type="Bgee" id="ENSG00000120509">
    <property type="expression patterns" value="Expressed in ileal mucosa and 183 other cell types or tissues"/>
</dbReference>
<dbReference type="GO" id="GO:0005912">
    <property type="term" value="C:adherens junction"/>
    <property type="evidence" value="ECO:0007669"/>
    <property type="project" value="UniProtKB-SubCell"/>
</dbReference>
<dbReference type="GO" id="GO:0016323">
    <property type="term" value="C:basolateral plasma membrane"/>
    <property type="evidence" value="ECO:0000314"/>
    <property type="project" value="UniProtKB"/>
</dbReference>
<dbReference type="GO" id="GO:0005911">
    <property type="term" value="C:cell-cell junction"/>
    <property type="evidence" value="ECO:0000318"/>
    <property type="project" value="GO_Central"/>
</dbReference>
<dbReference type="GO" id="GO:0005829">
    <property type="term" value="C:cytosol"/>
    <property type="evidence" value="ECO:0000314"/>
    <property type="project" value="UniProtKB"/>
</dbReference>
<dbReference type="GO" id="GO:0005576">
    <property type="term" value="C:extracellular region"/>
    <property type="evidence" value="ECO:0007669"/>
    <property type="project" value="UniProtKB-SubCell"/>
</dbReference>
<dbReference type="GO" id="GO:0046930">
    <property type="term" value="C:pore complex"/>
    <property type="evidence" value="ECO:0000315"/>
    <property type="project" value="UniProtKB"/>
</dbReference>
<dbReference type="GO" id="GO:0098793">
    <property type="term" value="C:presynapse"/>
    <property type="evidence" value="ECO:0007669"/>
    <property type="project" value="GOC"/>
</dbReference>
<dbReference type="GO" id="GO:0030674">
    <property type="term" value="F:protein-macromolecule adaptor activity"/>
    <property type="evidence" value="ECO:0000318"/>
    <property type="project" value="GO_Central"/>
</dbReference>
<dbReference type="GO" id="GO:0007269">
    <property type="term" value="P:neurotransmitter secretion"/>
    <property type="evidence" value="ECO:0000318"/>
    <property type="project" value="GO_Central"/>
</dbReference>
<dbReference type="GO" id="GO:0046931">
    <property type="term" value="P:pore complex assembly"/>
    <property type="evidence" value="ECO:0000315"/>
    <property type="project" value="UniProtKB"/>
</dbReference>
<dbReference type="GO" id="GO:0008582">
    <property type="term" value="P:regulation of synaptic assembly at neuromuscular junction"/>
    <property type="evidence" value="ECO:0000318"/>
    <property type="project" value="GO_Central"/>
</dbReference>
<dbReference type="GO" id="GO:0048489">
    <property type="term" value="P:synaptic vesicle transport"/>
    <property type="evidence" value="ECO:0000318"/>
    <property type="project" value="GO_Central"/>
</dbReference>
<dbReference type="CDD" id="cd06752">
    <property type="entry name" value="PDZ_PDZD11-like"/>
    <property type="match status" value="1"/>
</dbReference>
<dbReference type="FunFam" id="2.30.42.10:FF:000096">
    <property type="entry name" value="PDZ domain-containing protein 11"/>
    <property type="match status" value="1"/>
</dbReference>
<dbReference type="Gene3D" id="2.30.42.10">
    <property type="match status" value="1"/>
</dbReference>
<dbReference type="InterPro" id="IPR051109">
    <property type="entry name" value="MAM_complex_regulator"/>
</dbReference>
<dbReference type="InterPro" id="IPR001478">
    <property type="entry name" value="PDZ"/>
</dbReference>
<dbReference type="InterPro" id="IPR036034">
    <property type="entry name" value="PDZ_sf"/>
</dbReference>
<dbReference type="PANTHER" id="PTHR14063">
    <property type="entry name" value="PROTEIN LIN-7 HOMOLOG"/>
    <property type="match status" value="1"/>
</dbReference>
<dbReference type="Pfam" id="PF00595">
    <property type="entry name" value="PDZ"/>
    <property type="match status" value="1"/>
</dbReference>
<dbReference type="SMART" id="SM00228">
    <property type="entry name" value="PDZ"/>
    <property type="match status" value="1"/>
</dbReference>
<dbReference type="SUPFAM" id="SSF50156">
    <property type="entry name" value="PDZ domain-like"/>
    <property type="match status" value="1"/>
</dbReference>
<dbReference type="PROSITE" id="PS50106">
    <property type="entry name" value="PDZ"/>
    <property type="match status" value="1"/>
</dbReference>
<feature type="chain" id="PRO_0000058273" description="PDZ domain-containing protein 11">
    <location>
        <begin position="1"/>
        <end position="140"/>
    </location>
</feature>
<feature type="domain" description="PDZ" evidence="1">
    <location>
        <begin position="47"/>
        <end position="129"/>
    </location>
</feature>
<feature type="splice variant" id="VSP_015077" description="In isoform 2." evidence="7">
    <original>M</original>
    <variation>MGWSCCLKLAGLLSLLNHFLSVLIHSSRALPE</variation>
    <location>
        <position position="1"/>
    </location>
</feature>
<feature type="sequence variant" id="VAR_069422" description="In dbSNP:rs1245281228." evidence="5">
    <original>S</original>
    <variation>Y</variation>
    <location>
        <position position="81"/>
    </location>
</feature>
<name>PDZ11_HUMAN</name>
<keyword id="KW-0025">Alternative splicing</keyword>
<keyword id="KW-0965">Cell junction</keyword>
<keyword id="KW-1003">Cell membrane</keyword>
<keyword id="KW-0963">Cytoplasm</keyword>
<keyword id="KW-0472">Membrane</keyword>
<keyword id="KW-1267">Proteomics identification</keyword>
<keyword id="KW-1185">Reference proteome</keyword>
<keyword id="KW-0964">Secreted</keyword>
<comment type="function">
    <text evidence="6">Mediates docking of ADAM10 to zonula adherens by interacting with PLEKHA7 which is required for PLEKHA7 to interact with the ADAM10-binding protein TSPAN33.</text>
</comment>
<comment type="subunit">
    <text evidence="2 3 4 6">Interacts with ATP2B1, ATP2B2, ATP2B3, ATP2B4 and ATP7A (PubMed:12763866, PubMed:16051599). Interacts with PLEKHA7 (via WW domains) at zonula adherens; this interaction is essential for the interaction between PLEKHA7 and the ADAM10-binding protein TSPAN33 (PubMed:30463011). Interacts with SLC5A6 (PubMed:21183659).</text>
</comment>
<comment type="interaction">
    <interactant intactId="EBI-1644207">
        <id>Q5EBL8</id>
    </interactant>
    <interactant intactId="EBI-7706409">
        <id>Q04656</id>
        <label>ATP7A</label>
    </interactant>
    <organismsDiffer>false</organismsDiffer>
    <experiments>4</experiments>
</comment>
<comment type="interaction">
    <interactant intactId="EBI-1644207">
        <id>Q5EBL8</id>
    </interactant>
    <interactant intactId="EBI-12081182">
        <id>Q86UL8-2</id>
        <label>MAGI2</label>
    </interactant>
    <organismsDiffer>false</organismsDiffer>
    <experiments>3</experiments>
</comment>
<comment type="interaction">
    <interactant intactId="EBI-1644207">
        <id>Q5EBL8</id>
    </interactant>
    <interactant intactId="EBI-945934">
        <id>Q9HAU0</id>
        <label>PLEKHA5</label>
    </interactant>
    <organismsDiffer>false</organismsDiffer>
    <experiments>11</experiments>
</comment>
<comment type="interaction">
    <interactant intactId="EBI-1644207">
        <id>Q5EBL8</id>
    </interactant>
    <interactant intactId="EBI-3915941">
        <id>Q9Y289</id>
        <label>SLC5A6</label>
    </interactant>
    <organismsDiffer>false</organismsDiffer>
    <experiments>6</experiments>
</comment>
<comment type="subcellular location">
    <molecule>Isoform 2</molecule>
    <subcellularLocation>
        <location evidence="8">Secreted</location>
    </subcellularLocation>
</comment>
<comment type="subcellular location">
    <molecule>Isoform 1</molecule>
    <subcellularLocation>
        <location evidence="2">Cytoplasm</location>
    </subcellularLocation>
    <subcellularLocation>
        <location evidence="6">Cell junction</location>
        <location evidence="6">Adherens junction</location>
    </subcellularLocation>
    <subcellularLocation>
        <location evidence="6">Cell membrane</location>
    </subcellularLocation>
</comment>
<comment type="alternative products">
    <event type="alternative splicing"/>
    <isoform>
        <id>Q5EBL8-1</id>
        <name>1</name>
        <name>AIPP1a</name>
        <sequence type="displayed"/>
    </isoform>
    <isoform>
        <id>Q5EBL8-2</id>
        <name>2</name>
        <name>AIPP1b</name>
        <sequence type="described" ref="VSP_015077"/>
    </isoform>
</comment>
<comment type="tissue specificity">
    <text evidence="2">Widely expressed (at protein level).</text>
</comment>
<evidence type="ECO:0000255" key="1">
    <source>
        <dbReference type="PROSITE-ProRule" id="PRU00143"/>
    </source>
</evidence>
<evidence type="ECO:0000269" key="2">
    <source>
    </source>
</evidence>
<evidence type="ECO:0000269" key="3">
    <source>
    </source>
</evidence>
<evidence type="ECO:0000269" key="4">
    <source>
    </source>
</evidence>
<evidence type="ECO:0000269" key="5">
    <source>
    </source>
</evidence>
<evidence type="ECO:0000269" key="6">
    <source>
    </source>
</evidence>
<evidence type="ECO:0000303" key="7">
    <source>
    </source>
</evidence>
<evidence type="ECO:0000305" key="8"/>
<protein>
    <recommendedName>
        <fullName>PDZ domain-containing protein 11</fullName>
    </recommendedName>
    <alternativeName>
        <fullName>ATPase-interacting PDZ protein</fullName>
    </alternativeName>
    <alternativeName>
        <fullName>Plasma membrane calcium ATPase-interacting single-PDZ protein</fullName>
        <shortName>PMCA-interacting single-PDZ protein</shortName>
    </alternativeName>
</protein>
<gene>
    <name type="primary">PDZD11</name>
    <name type="synonym">AIPP1</name>
    <name type="synonym">PDZK11</name>
    <name type="synonym">PISP</name>
    <name type="ORF">HSPC227</name>
    <name type="ORF">UNQ6486/PRO21335</name>
</gene>